<proteinExistence type="evidence at protein level"/>
<dbReference type="EC" id="4.1.3.3" evidence="4"/>
<dbReference type="EMBL" id="AJ271330">
    <property type="protein sequence ID" value="CAC27797.1"/>
    <property type="molecule type" value="mRNA"/>
</dbReference>
<dbReference type="RefSeq" id="NP_999236.1">
    <property type="nucleotide sequence ID" value="NM_214071.1"/>
</dbReference>
<dbReference type="RefSeq" id="XP_013846578.1">
    <property type="nucleotide sequence ID" value="XM_013991124.1"/>
</dbReference>
<dbReference type="RefSeq" id="XP_020957870.1">
    <property type="nucleotide sequence ID" value="XM_021102211.1"/>
</dbReference>
<dbReference type="SMR" id="Q9BEC7"/>
<dbReference type="FunCoup" id="Q9BEC7">
    <property type="interactions" value="81"/>
</dbReference>
<dbReference type="STRING" id="9823.ENSSSCP00000043361"/>
<dbReference type="PaxDb" id="9823-ENSSSCP00000027926"/>
<dbReference type="PeptideAtlas" id="Q9BEC7"/>
<dbReference type="Ensembl" id="ENSSSCT00060017262.1">
    <property type="protein sequence ID" value="ENSSSCP00060006864.1"/>
    <property type="gene ID" value="ENSSSCG00060013130.1"/>
</dbReference>
<dbReference type="Ensembl" id="ENSSSCT00070025339.1">
    <property type="protein sequence ID" value="ENSSSCP00070020996.1"/>
    <property type="gene ID" value="ENSSSCG00070012924.1"/>
</dbReference>
<dbReference type="Ensembl" id="ENSSSCT00090044342">
    <property type="protein sequence ID" value="ENSSSCP00090027603"/>
    <property type="gene ID" value="ENSSSCG00090025001"/>
</dbReference>
<dbReference type="Ensembl" id="ENSSSCT00110028378">
    <property type="protein sequence ID" value="ENSSSCP00110019020"/>
    <property type="gene ID" value="ENSSSCG00110014934"/>
</dbReference>
<dbReference type="Ensembl" id="ENSSSCT00115005819">
    <property type="protein sequence ID" value="ENSSSCP00115005413"/>
    <property type="gene ID" value="ENSSSCG00115003448"/>
</dbReference>
<dbReference type="Ensembl" id="ENSSSCT00130045050">
    <property type="protein sequence ID" value="ENSSSCP00130031597"/>
    <property type="gene ID" value="ENSSSCG00130023326"/>
</dbReference>
<dbReference type="GeneID" id="397141"/>
<dbReference type="KEGG" id="ssc:397141"/>
<dbReference type="CTD" id="80896"/>
<dbReference type="eggNOG" id="ENOG502QQA3">
    <property type="taxonomic scope" value="Eukaryota"/>
</dbReference>
<dbReference type="HOGENOM" id="CLU_049343_6_1_1"/>
<dbReference type="InParanoid" id="Q9BEC7"/>
<dbReference type="OMA" id="YLYHIPP"/>
<dbReference type="OrthoDB" id="191315at2759"/>
<dbReference type="TreeFam" id="TF353639"/>
<dbReference type="BRENDA" id="4.1.3.3">
    <property type="organism ID" value="6170"/>
</dbReference>
<dbReference type="Reactome" id="R-SSC-4085001">
    <property type="pathway name" value="Sialic acid metabolism"/>
</dbReference>
<dbReference type="UniPathway" id="UPA00629"/>
<dbReference type="Proteomes" id="UP000008227">
    <property type="component" value="Unplaced"/>
</dbReference>
<dbReference type="Proteomes" id="UP000314985">
    <property type="component" value="Chromosome 9"/>
</dbReference>
<dbReference type="Proteomes" id="UP000694570">
    <property type="component" value="Unplaced"/>
</dbReference>
<dbReference type="Proteomes" id="UP000694571">
    <property type="component" value="Unplaced"/>
</dbReference>
<dbReference type="Proteomes" id="UP000694720">
    <property type="component" value="Unplaced"/>
</dbReference>
<dbReference type="Proteomes" id="UP000694722">
    <property type="component" value="Unplaced"/>
</dbReference>
<dbReference type="Proteomes" id="UP000694723">
    <property type="component" value="Unplaced"/>
</dbReference>
<dbReference type="Proteomes" id="UP000694724">
    <property type="component" value="Unplaced"/>
</dbReference>
<dbReference type="Proteomes" id="UP000694725">
    <property type="component" value="Unplaced"/>
</dbReference>
<dbReference type="Proteomes" id="UP000694726">
    <property type="component" value="Unplaced"/>
</dbReference>
<dbReference type="Proteomes" id="UP000694727">
    <property type="component" value="Unplaced"/>
</dbReference>
<dbReference type="Proteomes" id="UP000694728">
    <property type="component" value="Unplaced"/>
</dbReference>
<dbReference type="GO" id="GO:0005737">
    <property type="term" value="C:cytoplasm"/>
    <property type="evidence" value="ECO:0007669"/>
    <property type="project" value="UniProtKB-SubCell"/>
</dbReference>
<dbReference type="GO" id="GO:0008747">
    <property type="term" value="F:N-acetylneuraminate lyase activity"/>
    <property type="evidence" value="ECO:0000314"/>
    <property type="project" value="MGI"/>
</dbReference>
<dbReference type="GO" id="GO:0005975">
    <property type="term" value="P:carbohydrate metabolic process"/>
    <property type="evidence" value="ECO:0007669"/>
    <property type="project" value="InterPro"/>
</dbReference>
<dbReference type="GO" id="GO:0019262">
    <property type="term" value="P:N-acetylneuraminate catabolic process"/>
    <property type="evidence" value="ECO:0000314"/>
    <property type="project" value="UniProtKB"/>
</dbReference>
<dbReference type="CDD" id="cd00954">
    <property type="entry name" value="NAL"/>
    <property type="match status" value="1"/>
</dbReference>
<dbReference type="FunFam" id="3.20.20.70:FF:000133">
    <property type="entry name" value="N-acetylneuraminate pyruvate lyase"/>
    <property type="match status" value="1"/>
</dbReference>
<dbReference type="Gene3D" id="3.20.20.70">
    <property type="entry name" value="Aldolase class I"/>
    <property type="match status" value="1"/>
</dbReference>
<dbReference type="InterPro" id="IPR013785">
    <property type="entry name" value="Aldolase_TIM"/>
</dbReference>
<dbReference type="InterPro" id="IPR002220">
    <property type="entry name" value="DapA-like"/>
</dbReference>
<dbReference type="InterPro" id="IPR005264">
    <property type="entry name" value="NanA"/>
</dbReference>
<dbReference type="PANTHER" id="PTHR12128">
    <property type="entry name" value="DIHYDRODIPICOLINATE SYNTHASE"/>
    <property type="match status" value="1"/>
</dbReference>
<dbReference type="PANTHER" id="PTHR12128:SF21">
    <property type="entry name" value="N-ACETYLNEURAMINATE LYASE"/>
    <property type="match status" value="1"/>
</dbReference>
<dbReference type="Pfam" id="PF00701">
    <property type="entry name" value="DHDPS"/>
    <property type="match status" value="1"/>
</dbReference>
<dbReference type="PIRSF" id="PIRSF001365">
    <property type="entry name" value="DHDPS"/>
    <property type="match status" value="1"/>
</dbReference>
<dbReference type="PRINTS" id="PR00146">
    <property type="entry name" value="DHPICSNTHASE"/>
</dbReference>
<dbReference type="SMART" id="SM01130">
    <property type="entry name" value="DHDPS"/>
    <property type="match status" value="1"/>
</dbReference>
<dbReference type="SUPFAM" id="SSF51569">
    <property type="entry name" value="Aldolase"/>
    <property type="match status" value="1"/>
</dbReference>
<evidence type="ECO:0000250" key="1">
    <source>
        <dbReference type="UniProtKB" id="P0A6L4"/>
    </source>
</evidence>
<evidence type="ECO:0000250" key="2">
    <source>
        <dbReference type="UniProtKB" id="Q9BXD5"/>
    </source>
</evidence>
<evidence type="ECO:0000269" key="3">
    <source>
    </source>
</evidence>
<evidence type="ECO:0000269" key="4">
    <source>
    </source>
</evidence>
<evidence type="ECO:0000305" key="5"/>
<evidence type="ECO:0000305" key="6">
    <source>
    </source>
</evidence>
<evidence type="ECO:0000305" key="7">
    <source>
    </source>
</evidence>
<organism>
    <name type="scientific">Sus scrofa</name>
    <name type="common">Pig</name>
    <dbReference type="NCBI Taxonomy" id="9823"/>
    <lineage>
        <taxon>Eukaryota</taxon>
        <taxon>Metazoa</taxon>
        <taxon>Chordata</taxon>
        <taxon>Craniata</taxon>
        <taxon>Vertebrata</taxon>
        <taxon>Euteleostomi</taxon>
        <taxon>Mammalia</taxon>
        <taxon>Eutheria</taxon>
        <taxon>Laurasiatheria</taxon>
        <taxon>Artiodactyla</taxon>
        <taxon>Suina</taxon>
        <taxon>Suidae</taxon>
        <taxon>Sus</taxon>
    </lineage>
</organism>
<keyword id="KW-0119">Carbohydrate metabolism</keyword>
<keyword id="KW-0963">Cytoplasm</keyword>
<keyword id="KW-0903">Direct protein sequencing</keyword>
<keyword id="KW-0456">Lyase</keyword>
<keyword id="KW-1185">Reference proteome</keyword>
<keyword id="KW-0704">Schiff base</keyword>
<gene>
    <name evidence="2" type="primary">NPL</name>
</gene>
<sequence length="319" mass="35062">MASPKKKLQGLVAATITPMTEHGEINFSVIGQYVDYLVEVQGVKNIFVNGTTGEGLSLSISERCQVAEEWVTKGRNKLDQIVIHVGALSLKESQELAQHAAKIGADGIAVIAPFFLKPWNKDNLINFLKEVAAAAPALPFYYYHIPALTGVKIRAEELLDGIQDKIPTFQGLKFSDTDLLDFGQCVDQNHQRQFAFLFGVDEQLLSALVMGATGAVGSTYNYLGRKTNQMLEAFERKDFSSALNHQFCIQRFINFVVKLGFGVSQTKAIMTLVSGIPMGPPRLPLQKASREFTDNAKAKLKSLDVLSFTDLKDGNLEAC</sequence>
<protein>
    <recommendedName>
        <fullName evidence="2">N-acetylneuraminate lyase</fullName>
        <shortName>NALase</shortName>
        <ecNumber evidence="4">4.1.3.3</ecNumber>
    </recommendedName>
    <alternativeName>
        <fullName>N-acetylneuraminate pyruvate-lyase</fullName>
    </alternativeName>
    <alternativeName>
        <fullName>N-acetylneuraminic acid aldolase</fullName>
    </alternativeName>
    <alternativeName>
        <fullName>Sialate lyase</fullName>
    </alternativeName>
    <alternativeName>
        <fullName>Sialate-pyruvate lyase</fullName>
    </alternativeName>
    <alternativeName>
        <fullName>Sialic acid aldolase</fullName>
    </alternativeName>
    <alternativeName>
        <fullName>Sialic acid lyase</fullName>
    </alternativeName>
</protein>
<reference key="1">
    <citation type="journal article" date="2001" name="Eur. J. Biochem.">
        <title>The sialate-pyruvate lyase from pig kidney. Elucidation of the primary structure and expression of recombinant enzyme activity.</title>
        <authorList>
            <person name="Traving C."/>
            <person name="Bruse P."/>
            <person name="Waechter A."/>
            <person name="Schauer R."/>
        </authorList>
    </citation>
    <scope>NUCLEOTIDE SEQUENCE [MRNA]</scope>
    <scope>FUNCTION</scope>
    <scope>CATALYTIC ACTIVITY</scope>
    <scope>PATHWAY</scope>
    <source>
        <tissue>Kidney</tissue>
    </source>
</reference>
<reference key="2">
    <citation type="journal article" date="1999" name="Glycoconj. J.">
        <title>The sialate pyruvate-lyase from pig kidney: purification, properties and genetic relationship.</title>
        <authorList>
            <person name="Sommer U."/>
            <person name="Traving C."/>
            <person name="Schauer R."/>
        </authorList>
    </citation>
    <scope>PROTEIN SEQUENCE OF 103-108; 122-127; 153-158; 166-171 AND 227-232</scope>
    <scope>SUBUNIT</scope>
    <scope>SUBCELLULAR LOCATION</scope>
    <scope>BIOPHYSICOCHEMICAL PROPERTIES</scope>
    <source>
        <tissue>Kidney</tissue>
    </source>
</reference>
<feature type="chain" id="PRO_0000273354" description="N-acetylneuraminate lyase">
    <location>
        <begin position="1"/>
        <end position="319"/>
    </location>
</feature>
<feature type="active site" description="Proton donor" evidence="1">
    <location>
        <position position="143"/>
    </location>
</feature>
<feature type="active site" description="Schiff-base intermediate with substrate" evidence="1">
    <location>
        <position position="173"/>
    </location>
</feature>
<feature type="binding site" evidence="1">
    <location>
        <position position="51"/>
    </location>
    <ligand>
        <name>aceneuramate</name>
        <dbReference type="ChEBI" id="CHEBI:173083"/>
    </ligand>
</feature>
<feature type="binding site" evidence="1">
    <location>
        <position position="52"/>
    </location>
    <ligand>
        <name>aceneuramate</name>
        <dbReference type="ChEBI" id="CHEBI:173083"/>
    </ligand>
</feature>
<feature type="binding site" evidence="1">
    <location>
        <position position="175"/>
    </location>
    <ligand>
        <name>aceneuramate</name>
        <dbReference type="ChEBI" id="CHEBI:173083"/>
    </ligand>
</feature>
<feature type="binding site" evidence="1">
    <location>
        <position position="199"/>
    </location>
    <ligand>
        <name>aceneuramate</name>
        <dbReference type="ChEBI" id="CHEBI:173083"/>
    </ligand>
</feature>
<feature type="binding site" evidence="1">
    <location>
        <position position="201"/>
    </location>
    <ligand>
        <name>aceneuramate</name>
        <dbReference type="ChEBI" id="CHEBI:173083"/>
    </ligand>
</feature>
<feature type="binding site" evidence="1">
    <location>
        <position position="202"/>
    </location>
    <ligand>
        <name>aceneuramate</name>
        <dbReference type="ChEBI" id="CHEBI:173083"/>
    </ligand>
</feature>
<feature type="binding site" evidence="1">
    <location>
        <position position="218"/>
    </location>
    <ligand>
        <name>aceneuramate</name>
        <dbReference type="ChEBI" id="CHEBI:173083"/>
    </ligand>
</feature>
<comment type="function">
    <text evidence="4">Catalyzes the cleavage of N-acetylneuraminic acid (sialic acid) to form pyruvate and N-acetylmannosamine via a Schiff base intermediate. It prevents sialic acids from being recycled and returning to the cell surface. Involved in the N-glycolylneuraminic acid (Neu5Gc) degradation pathway.</text>
</comment>
<comment type="catalytic activity">
    <reaction evidence="4">
        <text>aceneuramate = aldehydo-N-acetyl-D-mannosamine + pyruvate</text>
        <dbReference type="Rhea" id="RHEA:23296"/>
        <dbReference type="ChEBI" id="CHEBI:15361"/>
        <dbReference type="ChEBI" id="CHEBI:17122"/>
        <dbReference type="ChEBI" id="CHEBI:173083"/>
        <dbReference type="EC" id="4.1.3.3"/>
    </reaction>
</comment>
<comment type="biophysicochemical properties">
    <kinetics>
        <Vmax evidence="3">2.3 umol/min/mg enzyme</Vmax>
    </kinetics>
    <phDependence>
        <text evidence="3">Optimum pH is 7.6-8.0.</text>
    </phDependence>
</comment>
<comment type="pathway">
    <text evidence="7">Amino-sugar metabolism; N-acetylneuraminate degradation.</text>
</comment>
<comment type="subunit">
    <text evidence="6">Homotetramer.</text>
</comment>
<comment type="subcellular location">
    <subcellularLocation>
        <location evidence="3">Cytoplasm</location>
    </subcellularLocation>
</comment>
<comment type="similarity">
    <text evidence="5">Belongs to the DapA family. NanA subfamily.</text>
</comment>
<name>NPL_PIG</name>
<accession>Q9BEC7</accession>